<feature type="chain" id="PRO_0000358505" description="NADH-quinone oxidoreductase subunit B">
    <location>
        <begin position="1"/>
        <end position="159"/>
    </location>
</feature>
<feature type="binding site" evidence="2">
    <location>
        <position position="37"/>
    </location>
    <ligand>
        <name>[4Fe-4S] cluster</name>
        <dbReference type="ChEBI" id="CHEBI:49883"/>
    </ligand>
</feature>
<feature type="binding site" evidence="2">
    <location>
        <position position="38"/>
    </location>
    <ligand>
        <name>[4Fe-4S] cluster</name>
        <dbReference type="ChEBI" id="CHEBI:49883"/>
    </ligand>
</feature>
<feature type="binding site" evidence="2">
    <location>
        <position position="102"/>
    </location>
    <ligand>
        <name>[4Fe-4S] cluster</name>
        <dbReference type="ChEBI" id="CHEBI:49883"/>
    </ligand>
</feature>
<feature type="binding site" evidence="2">
    <location>
        <position position="132"/>
    </location>
    <ligand>
        <name>[4Fe-4S] cluster</name>
        <dbReference type="ChEBI" id="CHEBI:49883"/>
    </ligand>
</feature>
<evidence type="ECO:0000250" key="1"/>
<evidence type="ECO:0000255" key="2">
    <source>
        <dbReference type="HAMAP-Rule" id="MF_01356"/>
    </source>
</evidence>
<accession>A5CXF8</accession>
<reference key="1">
    <citation type="journal article" date="2007" name="Curr. Biol.">
        <title>Reduced genome of the thioautotrophic intracellular symbiont in a deep-sea clam, Calyptogena okutanii.</title>
        <authorList>
            <person name="Kuwahara H."/>
            <person name="Yoshida T."/>
            <person name="Takaki Y."/>
            <person name="Shimamura S."/>
            <person name="Nishi S."/>
            <person name="Harada M."/>
            <person name="Matsuyama K."/>
            <person name="Takishita K."/>
            <person name="Kawato M."/>
            <person name="Uematsu K."/>
            <person name="Fujiwara Y."/>
            <person name="Sato T."/>
            <person name="Kato C."/>
            <person name="Kitagawa M."/>
            <person name="Kato I."/>
            <person name="Maruyama T."/>
        </authorList>
    </citation>
    <scope>NUCLEOTIDE SEQUENCE [LARGE SCALE GENOMIC DNA]</scope>
    <source>
        <strain>HA</strain>
    </source>
</reference>
<sequence>MAIEGLIKQGFVTMSLDRVINWARTGSLWPMTFGLACCAVEMMEAGSSRYDLDRFGIVFRPTPRQSDLMIVAGTLTNKMAPALRKVYDQMPEPKWVISMGSCANGGGYYHYSYAVIRGCDRIVPVDIYVPGCPPTAEALLYGIMQLQDKIRRTNTIART</sequence>
<keyword id="KW-0004">4Fe-4S</keyword>
<keyword id="KW-0997">Cell inner membrane</keyword>
<keyword id="KW-1003">Cell membrane</keyword>
<keyword id="KW-0408">Iron</keyword>
<keyword id="KW-0411">Iron-sulfur</keyword>
<keyword id="KW-0472">Membrane</keyword>
<keyword id="KW-0479">Metal-binding</keyword>
<keyword id="KW-0520">NAD</keyword>
<keyword id="KW-0874">Quinone</keyword>
<keyword id="KW-1185">Reference proteome</keyword>
<keyword id="KW-1278">Translocase</keyword>
<keyword id="KW-0813">Transport</keyword>
<keyword id="KW-0830">Ubiquinone</keyword>
<gene>
    <name evidence="2" type="primary">nuoB</name>
    <name type="ordered locus">COSY_0230</name>
</gene>
<comment type="function">
    <text evidence="1">NDH-1 shuttles electrons from NADH, via FMN and iron-sulfur (Fe-S) centers, to quinones in the respiratory chain. Couples the redox reaction to proton translocation (for every two electrons transferred, four hydrogen ions are translocated across the cytoplasmic membrane), and thus conserves the redox energy in a proton gradient (By similarity).</text>
</comment>
<comment type="catalytic activity">
    <reaction evidence="2">
        <text>a quinone + NADH + 5 H(+)(in) = a quinol + NAD(+) + 4 H(+)(out)</text>
        <dbReference type="Rhea" id="RHEA:57888"/>
        <dbReference type="ChEBI" id="CHEBI:15378"/>
        <dbReference type="ChEBI" id="CHEBI:24646"/>
        <dbReference type="ChEBI" id="CHEBI:57540"/>
        <dbReference type="ChEBI" id="CHEBI:57945"/>
        <dbReference type="ChEBI" id="CHEBI:132124"/>
    </reaction>
</comment>
<comment type="cofactor">
    <cofactor evidence="2">
        <name>[4Fe-4S] cluster</name>
        <dbReference type="ChEBI" id="CHEBI:49883"/>
    </cofactor>
    <text evidence="2">Binds 1 [4Fe-4S] cluster.</text>
</comment>
<comment type="subunit">
    <text evidence="2">NDH-1 is composed of 14 different subunits. Subunits NuoB, C, D, E, F, and G constitute the peripheral sector of the complex.</text>
</comment>
<comment type="subcellular location">
    <subcellularLocation>
        <location evidence="2">Cell inner membrane</location>
        <topology evidence="2">Peripheral membrane protein</topology>
        <orientation evidence="2">Cytoplasmic side</orientation>
    </subcellularLocation>
</comment>
<comment type="similarity">
    <text evidence="2">Belongs to the complex I 20 kDa subunit family.</text>
</comment>
<name>NUOB_VESOH</name>
<protein>
    <recommendedName>
        <fullName evidence="2">NADH-quinone oxidoreductase subunit B</fullName>
        <ecNumber evidence="2">7.1.1.-</ecNumber>
    </recommendedName>
    <alternativeName>
        <fullName evidence="2">NADH dehydrogenase I subunit B</fullName>
    </alternativeName>
    <alternativeName>
        <fullName evidence="2">NDH-1 subunit B</fullName>
    </alternativeName>
</protein>
<dbReference type="EC" id="7.1.1.-" evidence="2"/>
<dbReference type="EMBL" id="AP009247">
    <property type="protein sequence ID" value="BAF61360.1"/>
    <property type="molecule type" value="Genomic_DNA"/>
</dbReference>
<dbReference type="RefSeq" id="WP_011929630.1">
    <property type="nucleotide sequence ID" value="NC_009465.1"/>
</dbReference>
<dbReference type="SMR" id="A5CXF8"/>
<dbReference type="STRING" id="412965.COSY_0230"/>
<dbReference type="KEGG" id="vok:COSY_0230"/>
<dbReference type="eggNOG" id="COG0377">
    <property type="taxonomic scope" value="Bacteria"/>
</dbReference>
<dbReference type="HOGENOM" id="CLU_055737_7_3_6"/>
<dbReference type="OrthoDB" id="9786737at2"/>
<dbReference type="Proteomes" id="UP000000247">
    <property type="component" value="Chromosome"/>
</dbReference>
<dbReference type="GO" id="GO:0005886">
    <property type="term" value="C:plasma membrane"/>
    <property type="evidence" value="ECO:0007669"/>
    <property type="project" value="UniProtKB-SubCell"/>
</dbReference>
<dbReference type="GO" id="GO:0045271">
    <property type="term" value="C:respiratory chain complex I"/>
    <property type="evidence" value="ECO:0007669"/>
    <property type="project" value="TreeGrafter"/>
</dbReference>
<dbReference type="GO" id="GO:0051539">
    <property type="term" value="F:4 iron, 4 sulfur cluster binding"/>
    <property type="evidence" value="ECO:0007669"/>
    <property type="project" value="UniProtKB-KW"/>
</dbReference>
<dbReference type="GO" id="GO:0005506">
    <property type="term" value="F:iron ion binding"/>
    <property type="evidence" value="ECO:0007669"/>
    <property type="project" value="UniProtKB-UniRule"/>
</dbReference>
<dbReference type="GO" id="GO:0008137">
    <property type="term" value="F:NADH dehydrogenase (ubiquinone) activity"/>
    <property type="evidence" value="ECO:0007669"/>
    <property type="project" value="InterPro"/>
</dbReference>
<dbReference type="GO" id="GO:0050136">
    <property type="term" value="F:NADH:ubiquinone reductase (non-electrogenic) activity"/>
    <property type="evidence" value="ECO:0007669"/>
    <property type="project" value="UniProtKB-UniRule"/>
</dbReference>
<dbReference type="GO" id="GO:0048038">
    <property type="term" value="F:quinone binding"/>
    <property type="evidence" value="ECO:0007669"/>
    <property type="project" value="UniProtKB-KW"/>
</dbReference>
<dbReference type="GO" id="GO:0009060">
    <property type="term" value="P:aerobic respiration"/>
    <property type="evidence" value="ECO:0007669"/>
    <property type="project" value="TreeGrafter"/>
</dbReference>
<dbReference type="GO" id="GO:0015990">
    <property type="term" value="P:electron transport coupled proton transport"/>
    <property type="evidence" value="ECO:0007669"/>
    <property type="project" value="TreeGrafter"/>
</dbReference>
<dbReference type="FunFam" id="3.40.50.12280:FF:000001">
    <property type="entry name" value="NADH-quinone oxidoreductase subunit B 2"/>
    <property type="match status" value="1"/>
</dbReference>
<dbReference type="Gene3D" id="3.40.50.12280">
    <property type="match status" value="1"/>
</dbReference>
<dbReference type="HAMAP" id="MF_01356">
    <property type="entry name" value="NDH1_NuoB"/>
    <property type="match status" value="1"/>
</dbReference>
<dbReference type="InterPro" id="IPR006137">
    <property type="entry name" value="NADH_UbQ_OxRdtase-like_20kDa"/>
</dbReference>
<dbReference type="InterPro" id="IPR006138">
    <property type="entry name" value="NADH_UQ_OxRdtase_20Kd_su"/>
</dbReference>
<dbReference type="NCBIfam" id="TIGR01957">
    <property type="entry name" value="nuoB_fam"/>
    <property type="match status" value="1"/>
</dbReference>
<dbReference type="NCBIfam" id="NF005012">
    <property type="entry name" value="PRK06411.1"/>
    <property type="match status" value="1"/>
</dbReference>
<dbReference type="PANTHER" id="PTHR11995">
    <property type="entry name" value="NADH DEHYDROGENASE"/>
    <property type="match status" value="1"/>
</dbReference>
<dbReference type="PANTHER" id="PTHR11995:SF14">
    <property type="entry name" value="NADH DEHYDROGENASE [UBIQUINONE] IRON-SULFUR PROTEIN 7, MITOCHONDRIAL"/>
    <property type="match status" value="1"/>
</dbReference>
<dbReference type="Pfam" id="PF01058">
    <property type="entry name" value="Oxidored_q6"/>
    <property type="match status" value="1"/>
</dbReference>
<dbReference type="SUPFAM" id="SSF56770">
    <property type="entry name" value="HydA/Nqo6-like"/>
    <property type="match status" value="1"/>
</dbReference>
<dbReference type="PROSITE" id="PS01150">
    <property type="entry name" value="COMPLEX1_20K"/>
    <property type="match status" value="1"/>
</dbReference>
<organism>
    <name type="scientific">Vesicomyosocius okutanii subsp. Calyptogena okutanii (strain HA)</name>
    <dbReference type="NCBI Taxonomy" id="412965"/>
    <lineage>
        <taxon>Bacteria</taxon>
        <taxon>Pseudomonadati</taxon>
        <taxon>Pseudomonadota</taxon>
        <taxon>Gammaproteobacteria</taxon>
        <taxon>Candidatus Pseudothioglobaceae</taxon>
        <taxon>Candidatus Vesicomyosocius</taxon>
    </lineage>
</organism>
<proteinExistence type="inferred from homology"/>